<comment type="function">
    <text evidence="1">tRNA nucleus export receptor which facilitates tRNA translocation across the nuclear pore complex. Involved in pre-tRNA splicing, probably by affecting the interaction of pre-tRNA with splicing endonuclease (By similarity).</text>
</comment>
<comment type="subcellular location">
    <subcellularLocation>
        <location evidence="1">Nucleus</location>
    </subcellularLocation>
    <subcellularLocation>
        <location evidence="1">Cytoplasm</location>
    </subcellularLocation>
    <text evidence="1">Shuttles between the nucleus and the cytoplasm.</text>
</comment>
<comment type="similarity">
    <text evidence="2">Belongs to the exportin family.</text>
</comment>
<evidence type="ECO:0000250" key="1"/>
<evidence type="ECO:0000305" key="2"/>
<gene>
    <name type="primary">los1</name>
    <name type="ORF">SS1G_07334</name>
</gene>
<sequence length="1023" mass="114303">MDAQIEKAIEIAWDPRSDQNLKEQAVQYLTQVRGDSSSLQACLNLFTRDPKAAEVVRLVSLDIVNNAIQTQHIDDQSLRGLKEQLHDYVRRTYASGNEVDPPALQNKLTQTLTFLFSSLYKEGWESFIRDFLSFTGHQNGTVDNLPGVVLYLRLLSSIHDEIADLMIVRAGGETKRNVELKDLVRARDVQIVAGSFQHILTYWQGNNDAIVEMTLKVIGKWVSWIDISLVVNQDILNLLFPLVGRNPNGGEDKVKDAAIDCFTEIVAKKMKPSDKIGMILFLNLGEVVSQLIASPALHDLRNTSSYDTDLAEAVAKLVNNVVSDLVKILEDTKVEPEVRAQAEQSLQTFLPLLLRFFSDEYDEICATVIPSLTELNTFLRKAQPLPPAYSAMLTPILNAIIQKMRYDDTSSYADEDELTDEAEFQELRKRLQVLQKTIAAVDEALYVDVLSNVIGNTFQRLDQQNGQIDWRDLDLALHEMYLFGELTLVNGGLYAKSQPSSIAAERLIVMMSKMVESGIASFNHPAISLQYMEICVRYCSFFENQTQYIPQVLEQFVGFVHHNHSRVRIRSWYLFHRFVKHLRGQVGNVAETIIQSISDLLPLKAEVPKESDDDMSSEDGSHDAADVAFNAQLNLYEAIGCISSTTSTPIEKQAIYARTIMNPLFSDVQRHLEQAKSGNAQAVLQIHHIIFALGSLAHGFSDWSPGEGKRAGQAPAKEITIEFSRAAEAILFALEALKSSSEIRNAARSSFSRLMGVMGVAMLPLLPRWIDGLLTQSSSKEEIGMFLRLLDQVVFGFKKDIHEVLNSLLTPLFQRVFASLSEPVTGTDDGIQLAELRREYLSFVTVILNNELGSVLVSEQNQAFFDPLVQSVTTLAKTVTNETGNLAASKIAFSVMTKMAELWGGPTIATPGQPITSSVQPQPTFPGFDTFLIERFHPVCWEVLREPHFRPMVDAQSKSVLNELAGLEHVIYMKTGNMFVEHLQGNFFPSMGVDGSGFIKSMVESPERKGLATFLQNWLKGRA</sequence>
<dbReference type="EMBL" id="CH476629">
    <property type="protein sequence ID" value="EDO04851.1"/>
    <property type="molecule type" value="Genomic_DNA"/>
</dbReference>
<dbReference type="RefSeq" id="XP_001591888.1">
    <property type="nucleotide sequence ID" value="XM_001591838.1"/>
</dbReference>
<dbReference type="SMR" id="A7EPT5"/>
<dbReference type="FunCoup" id="A7EPT5">
    <property type="interactions" value="982"/>
</dbReference>
<dbReference type="STRING" id="665079.A7EPT5"/>
<dbReference type="EnsemblFungi" id="EDO04851">
    <property type="protein sequence ID" value="EDO04851"/>
    <property type="gene ID" value="SS1G_07334"/>
</dbReference>
<dbReference type="GeneID" id="5488030"/>
<dbReference type="KEGG" id="ssl:SS1G_07334"/>
<dbReference type="VEuPathDB" id="FungiDB:sscle_06g049980"/>
<dbReference type="eggNOG" id="KOG2021">
    <property type="taxonomic scope" value="Eukaryota"/>
</dbReference>
<dbReference type="HOGENOM" id="CLU_004414_0_1_1"/>
<dbReference type="InParanoid" id="A7EPT5"/>
<dbReference type="OMA" id="HEMFLFG"/>
<dbReference type="OrthoDB" id="26399at2759"/>
<dbReference type="Proteomes" id="UP000001312">
    <property type="component" value="Unassembled WGS sequence"/>
</dbReference>
<dbReference type="GO" id="GO:0005737">
    <property type="term" value="C:cytoplasm"/>
    <property type="evidence" value="ECO:0000318"/>
    <property type="project" value="GO_Central"/>
</dbReference>
<dbReference type="GO" id="GO:0016363">
    <property type="term" value="C:nuclear matrix"/>
    <property type="evidence" value="ECO:0000318"/>
    <property type="project" value="GO_Central"/>
</dbReference>
<dbReference type="GO" id="GO:0005643">
    <property type="term" value="C:nuclear pore"/>
    <property type="evidence" value="ECO:0000318"/>
    <property type="project" value="GO_Central"/>
</dbReference>
<dbReference type="GO" id="GO:0031267">
    <property type="term" value="F:small GTPase binding"/>
    <property type="evidence" value="ECO:0007669"/>
    <property type="project" value="InterPro"/>
</dbReference>
<dbReference type="GO" id="GO:0000049">
    <property type="term" value="F:tRNA binding"/>
    <property type="evidence" value="ECO:0000318"/>
    <property type="project" value="GO_Central"/>
</dbReference>
<dbReference type="GO" id="GO:0008033">
    <property type="term" value="P:tRNA processing"/>
    <property type="evidence" value="ECO:0007669"/>
    <property type="project" value="UniProtKB-KW"/>
</dbReference>
<dbReference type="GO" id="GO:0071528">
    <property type="term" value="P:tRNA re-export from nucleus"/>
    <property type="evidence" value="ECO:0000318"/>
    <property type="project" value="GO_Central"/>
</dbReference>
<dbReference type="FunFam" id="1.25.10.10:FF:000355">
    <property type="entry name" value="Exportin-T"/>
    <property type="match status" value="1"/>
</dbReference>
<dbReference type="Gene3D" id="1.25.10.10">
    <property type="entry name" value="Leucine-rich Repeat Variant"/>
    <property type="match status" value="1"/>
</dbReference>
<dbReference type="InterPro" id="IPR011989">
    <property type="entry name" value="ARM-like"/>
</dbReference>
<dbReference type="InterPro" id="IPR016024">
    <property type="entry name" value="ARM-type_fold"/>
</dbReference>
<dbReference type="InterPro" id="IPR013598">
    <property type="entry name" value="Exportin-1/Importin-b-like"/>
</dbReference>
<dbReference type="InterPro" id="IPR045546">
    <property type="entry name" value="Exportin-T_C"/>
</dbReference>
<dbReference type="InterPro" id="IPR040017">
    <property type="entry name" value="XPOT"/>
</dbReference>
<dbReference type="PANTHER" id="PTHR15952:SF11">
    <property type="entry name" value="EXPORTIN-T"/>
    <property type="match status" value="1"/>
</dbReference>
<dbReference type="PANTHER" id="PTHR15952">
    <property type="entry name" value="EXPORTIN-T/LOS1"/>
    <property type="match status" value="1"/>
</dbReference>
<dbReference type="Pfam" id="PF19282">
    <property type="entry name" value="Exportin-T"/>
    <property type="match status" value="1"/>
</dbReference>
<dbReference type="Pfam" id="PF08389">
    <property type="entry name" value="Xpo1"/>
    <property type="match status" value="1"/>
</dbReference>
<dbReference type="SUPFAM" id="SSF48371">
    <property type="entry name" value="ARM repeat"/>
    <property type="match status" value="1"/>
</dbReference>
<accession>A7EPT5</accession>
<protein>
    <recommendedName>
        <fullName>Exportin-T</fullName>
    </recommendedName>
    <alternativeName>
        <fullName>Exportin(tRNA)</fullName>
    </alternativeName>
    <alternativeName>
        <fullName>Karyopherin-beta</fullName>
    </alternativeName>
    <alternativeName>
        <fullName>tRNA exportin</fullName>
    </alternativeName>
</protein>
<proteinExistence type="inferred from homology"/>
<organism>
    <name type="scientific">Sclerotinia sclerotiorum (strain ATCC 18683 / 1980 / Ss-1)</name>
    <name type="common">White mold</name>
    <name type="synonym">Whetzelinia sclerotiorum</name>
    <dbReference type="NCBI Taxonomy" id="665079"/>
    <lineage>
        <taxon>Eukaryota</taxon>
        <taxon>Fungi</taxon>
        <taxon>Dikarya</taxon>
        <taxon>Ascomycota</taxon>
        <taxon>Pezizomycotina</taxon>
        <taxon>Leotiomycetes</taxon>
        <taxon>Helotiales</taxon>
        <taxon>Sclerotiniaceae</taxon>
        <taxon>Sclerotinia</taxon>
    </lineage>
</organism>
<keyword id="KW-0963">Cytoplasm</keyword>
<keyword id="KW-0539">Nucleus</keyword>
<keyword id="KW-1185">Reference proteome</keyword>
<keyword id="KW-0694">RNA-binding</keyword>
<keyword id="KW-0813">Transport</keyword>
<keyword id="KW-0819">tRNA processing</keyword>
<keyword id="KW-0820">tRNA-binding</keyword>
<reference key="1">
    <citation type="journal article" date="2011" name="PLoS Genet.">
        <title>Genomic analysis of the necrotrophic fungal pathogens Sclerotinia sclerotiorum and Botrytis cinerea.</title>
        <authorList>
            <person name="Amselem J."/>
            <person name="Cuomo C.A."/>
            <person name="van Kan J.A.L."/>
            <person name="Viaud M."/>
            <person name="Benito E.P."/>
            <person name="Couloux A."/>
            <person name="Coutinho P.M."/>
            <person name="de Vries R.P."/>
            <person name="Dyer P.S."/>
            <person name="Fillinger S."/>
            <person name="Fournier E."/>
            <person name="Gout L."/>
            <person name="Hahn M."/>
            <person name="Kohn L."/>
            <person name="Lapalu N."/>
            <person name="Plummer K.M."/>
            <person name="Pradier J.-M."/>
            <person name="Quevillon E."/>
            <person name="Sharon A."/>
            <person name="Simon A."/>
            <person name="ten Have A."/>
            <person name="Tudzynski B."/>
            <person name="Tudzynski P."/>
            <person name="Wincker P."/>
            <person name="Andrew M."/>
            <person name="Anthouard V."/>
            <person name="Beever R.E."/>
            <person name="Beffa R."/>
            <person name="Benoit I."/>
            <person name="Bouzid O."/>
            <person name="Brault B."/>
            <person name="Chen Z."/>
            <person name="Choquer M."/>
            <person name="Collemare J."/>
            <person name="Cotton P."/>
            <person name="Danchin E.G."/>
            <person name="Da Silva C."/>
            <person name="Gautier A."/>
            <person name="Giraud C."/>
            <person name="Giraud T."/>
            <person name="Gonzalez C."/>
            <person name="Grossetete S."/>
            <person name="Gueldener U."/>
            <person name="Henrissat B."/>
            <person name="Howlett B.J."/>
            <person name="Kodira C."/>
            <person name="Kretschmer M."/>
            <person name="Lappartient A."/>
            <person name="Leroch M."/>
            <person name="Levis C."/>
            <person name="Mauceli E."/>
            <person name="Neuveglise C."/>
            <person name="Oeser B."/>
            <person name="Pearson M."/>
            <person name="Poulain J."/>
            <person name="Poussereau N."/>
            <person name="Quesneville H."/>
            <person name="Rascle C."/>
            <person name="Schumacher J."/>
            <person name="Segurens B."/>
            <person name="Sexton A."/>
            <person name="Silva E."/>
            <person name="Sirven C."/>
            <person name="Soanes D.M."/>
            <person name="Talbot N.J."/>
            <person name="Templeton M."/>
            <person name="Yandava C."/>
            <person name="Yarden O."/>
            <person name="Zeng Q."/>
            <person name="Rollins J.A."/>
            <person name="Lebrun M.-H."/>
            <person name="Dickman M."/>
        </authorList>
    </citation>
    <scope>NUCLEOTIDE SEQUENCE [LARGE SCALE GENOMIC DNA]</scope>
    <source>
        <strain>ATCC 18683 / 1980 / Ss-1</strain>
    </source>
</reference>
<feature type="chain" id="PRO_0000343106" description="Exportin-T">
    <location>
        <begin position="1"/>
        <end position="1023"/>
    </location>
</feature>
<name>XPOT_SCLS1</name>